<organism>
    <name type="scientific">Pectobacterium atrosepticum (strain SCRI 1043 / ATCC BAA-672)</name>
    <name type="common">Erwinia carotovora subsp. atroseptica</name>
    <dbReference type="NCBI Taxonomy" id="218491"/>
    <lineage>
        <taxon>Bacteria</taxon>
        <taxon>Pseudomonadati</taxon>
        <taxon>Pseudomonadota</taxon>
        <taxon>Gammaproteobacteria</taxon>
        <taxon>Enterobacterales</taxon>
        <taxon>Pectobacteriaceae</taxon>
        <taxon>Pectobacterium</taxon>
    </lineage>
</organism>
<sequence>MAALYWQTEGAGNTDLVLLHGWGLNAQVWQSMVVRLAPHFRLHLVDLPGYGRSQGFGPMPLNDMANIVLTQAPERAVWLGWSLGGLVASQIALSAPLRVEKLITVASSPCFSAQDDWPGIKPDVLQGFQQQLSEDFQRTVERFLALQTLGTENARQDARLLKGVVLEQPMPSVDVLNGGLEILREADLRQPLADLTVPLLRLYGALDGLVPRKVAGRLDDEWPNSTSVVMPKAAHAPFISHPDAFTEQVIAFAQA</sequence>
<name>BIOH_PECAS</name>
<protein>
    <recommendedName>
        <fullName evidence="2">Pimeloyl-[acyl-carrier protein] methyl ester esterase</fullName>
        <ecNumber evidence="2">3.1.1.85</ecNumber>
    </recommendedName>
    <alternativeName>
        <fullName evidence="2">Biotin synthesis protein BioH</fullName>
    </alternativeName>
    <alternativeName>
        <fullName evidence="2">Carboxylesterase BioH</fullName>
    </alternativeName>
</protein>
<proteinExistence type="inferred from homology"/>
<comment type="function">
    <text evidence="2">The physiological role of BioH is to remove the methyl group introduced by BioC when the pimeloyl moiety is complete. It allows to synthesize pimeloyl-ACP via the fatty acid synthetic pathway through the hydrolysis of the ester bonds of pimeloyl-ACP esters.</text>
</comment>
<comment type="catalytic activity">
    <reaction evidence="2">
        <text>6-carboxyhexanoyl-[ACP] methyl ester + H2O = 6-carboxyhexanoyl-[ACP] + methanol + H(+)</text>
        <dbReference type="Rhea" id="RHEA:42700"/>
        <dbReference type="Rhea" id="RHEA-COMP:9955"/>
        <dbReference type="Rhea" id="RHEA-COMP:10186"/>
        <dbReference type="ChEBI" id="CHEBI:15377"/>
        <dbReference type="ChEBI" id="CHEBI:15378"/>
        <dbReference type="ChEBI" id="CHEBI:17790"/>
        <dbReference type="ChEBI" id="CHEBI:78846"/>
        <dbReference type="ChEBI" id="CHEBI:82735"/>
        <dbReference type="EC" id="3.1.1.85"/>
    </reaction>
</comment>
<comment type="pathway">
    <text evidence="2">Cofactor biosynthesis; biotin biosynthesis.</text>
</comment>
<comment type="subunit">
    <text evidence="2">Monomer.</text>
</comment>
<comment type="subcellular location">
    <subcellularLocation>
        <location evidence="2">Cytoplasm</location>
    </subcellularLocation>
</comment>
<comment type="similarity">
    <text evidence="2">Belongs to the AB hydrolase superfamily. Carboxylesterase BioH family.</text>
</comment>
<dbReference type="EC" id="3.1.1.85" evidence="2"/>
<dbReference type="EMBL" id="BX950851">
    <property type="protein sequence ID" value="CAG77029.1"/>
    <property type="molecule type" value="Genomic_DNA"/>
</dbReference>
<dbReference type="RefSeq" id="WP_011095604.1">
    <property type="nucleotide sequence ID" value="NC_004547.2"/>
</dbReference>
<dbReference type="SMR" id="Q6CZL9"/>
<dbReference type="STRING" id="218491.ECA4132"/>
<dbReference type="ESTHER" id="erwct-q6czl9">
    <property type="family name" value="BioH"/>
</dbReference>
<dbReference type="KEGG" id="eca:ECA4132"/>
<dbReference type="PATRIC" id="fig|218491.5.peg.4202"/>
<dbReference type="eggNOG" id="COG2267">
    <property type="taxonomic scope" value="Bacteria"/>
</dbReference>
<dbReference type="HOGENOM" id="CLU_020336_12_2_6"/>
<dbReference type="OrthoDB" id="9780744at2"/>
<dbReference type="UniPathway" id="UPA00078"/>
<dbReference type="Proteomes" id="UP000007966">
    <property type="component" value="Chromosome"/>
</dbReference>
<dbReference type="GO" id="GO:0005737">
    <property type="term" value="C:cytoplasm"/>
    <property type="evidence" value="ECO:0007669"/>
    <property type="project" value="UniProtKB-SubCell"/>
</dbReference>
<dbReference type="GO" id="GO:0090499">
    <property type="term" value="F:pimelyl-[acyl-carrier protein] methyl ester esterase activity"/>
    <property type="evidence" value="ECO:0007669"/>
    <property type="project" value="UniProtKB-EC"/>
</dbReference>
<dbReference type="GO" id="GO:0009102">
    <property type="term" value="P:biotin biosynthetic process"/>
    <property type="evidence" value="ECO:0007669"/>
    <property type="project" value="UniProtKB-UniRule"/>
</dbReference>
<dbReference type="Gene3D" id="3.40.50.1820">
    <property type="entry name" value="alpha/beta hydrolase"/>
    <property type="match status" value="1"/>
</dbReference>
<dbReference type="HAMAP" id="MF_01260">
    <property type="entry name" value="Carboxylester"/>
    <property type="match status" value="1"/>
</dbReference>
<dbReference type="InterPro" id="IPR000073">
    <property type="entry name" value="AB_hydrolase_1"/>
</dbReference>
<dbReference type="InterPro" id="IPR029058">
    <property type="entry name" value="AB_hydrolase_fold"/>
</dbReference>
<dbReference type="InterPro" id="IPR010076">
    <property type="entry name" value="BioH"/>
</dbReference>
<dbReference type="InterPro" id="IPR050228">
    <property type="entry name" value="Carboxylesterase_BioH"/>
</dbReference>
<dbReference type="NCBIfam" id="TIGR01738">
    <property type="entry name" value="bioH"/>
    <property type="match status" value="1"/>
</dbReference>
<dbReference type="PANTHER" id="PTHR43194">
    <property type="entry name" value="HYDROLASE ALPHA/BETA FOLD FAMILY"/>
    <property type="match status" value="1"/>
</dbReference>
<dbReference type="PANTHER" id="PTHR43194:SF5">
    <property type="entry name" value="PIMELOYL-[ACYL-CARRIER PROTEIN] METHYL ESTER ESTERASE"/>
    <property type="match status" value="1"/>
</dbReference>
<dbReference type="Pfam" id="PF00561">
    <property type="entry name" value="Abhydrolase_1"/>
    <property type="match status" value="1"/>
</dbReference>
<dbReference type="SUPFAM" id="SSF53474">
    <property type="entry name" value="alpha/beta-Hydrolases"/>
    <property type="match status" value="1"/>
</dbReference>
<keyword id="KW-0093">Biotin biosynthesis</keyword>
<keyword id="KW-0963">Cytoplasm</keyword>
<keyword id="KW-0378">Hydrolase</keyword>
<keyword id="KW-1185">Reference proteome</keyword>
<keyword id="KW-0719">Serine esterase</keyword>
<evidence type="ECO:0000255" key="1"/>
<evidence type="ECO:0000255" key="2">
    <source>
        <dbReference type="HAMAP-Rule" id="MF_01260"/>
    </source>
</evidence>
<feature type="chain" id="PRO_0000204476" description="Pimeloyl-[acyl-carrier protein] methyl ester esterase">
    <location>
        <begin position="1"/>
        <end position="255"/>
    </location>
</feature>
<feature type="domain" description="AB hydrolase-1" evidence="1">
    <location>
        <begin position="16"/>
        <end position="242"/>
    </location>
</feature>
<feature type="active site" description="Nucleophile" evidence="2">
    <location>
        <position position="82"/>
    </location>
</feature>
<feature type="active site" evidence="2">
    <location>
        <position position="207"/>
    </location>
</feature>
<feature type="active site" evidence="2">
    <location>
        <position position="235"/>
    </location>
</feature>
<feature type="binding site" evidence="2">
    <location>
        <position position="22"/>
    </location>
    <ligand>
        <name>substrate</name>
    </ligand>
</feature>
<feature type="binding site" evidence="2">
    <location>
        <begin position="82"/>
        <end position="83"/>
    </location>
    <ligand>
        <name>substrate</name>
    </ligand>
</feature>
<feature type="binding site" evidence="2">
    <location>
        <begin position="143"/>
        <end position="147"/>
    </location>
    <ligand>
        <name>substrate</name>
    </ligand>
</feature>
<feature type="binding site" evidence="2">
    <location>
        <position position="235"/>
    </location>
    <ligand>
        <name>substrate</name>
    </ligand>
</feature>
<accession>Q6CZL9</accession>
<gene>
    <name evidence="2" type="primary">bioH</name>
    <name type="ordered locus">ECA4132</name>
</gene>
<reference key="1">
    <citation type="journal article" date="2004" name="Proc. Natl. Acad. Sci. U.S.A.">
        <title>Genome sequence of the enterobacterial phytopathogen Erwinia carotovora subsp. atroseptica and characterization of virulence factors.</title>
        <authorList>
            <person name="Bell K.S."/>
            <person name="Sebaihia M."/>
            <person name="Pritchard L."/>
            <person name="Holden M.T.G."/>
            <person name="Hyman L.J."/>
            <person name="Holeva M.C."/>
            <person name="Thomson N.R."/>
            <person name="Bentley S.D."/>
            <person name="Churcher L.J.C."/>
            <person name="Mungall K."/>
            <person name="Atkin R."/>
            <person name="Bason N."/>
            <person name="Brooks K."/>
            <person name="Chillingworth T."/>
            <person name="Clark K."/>
            <person name="Doggett J."/>
            <person name="Fraser A."/>
            <person name="Hance Z."/>
            <person name="Hauser H."/>
            <person name="Jagels K."/>
            <person name="Moule S."/>
            <person name="Norbertczak H."/>
            <person name="Ormond D."/>
            <person name="Price C."/>
            <person name="Quail M.A."/>
            <person name="Sanders M."/>
            <person name="Walker D."/>
            <person name="Whitehead S."/>
            <person name="Salmond G.P.C."/>
            <person name="Birch P.R.J."/>
            <person name="Parkhill J."/>
            <person name="Toth I.K."/>
        </authorList>
    </citation>
    <scope>NUCLEOTIDE SEQUENCE [LARGE SCALE GENOMIC DNA]</scope>
    <source>
        <strain>SCRI 1043 / ATCC BAA-672</strain>
    </source>
</reference>